<sequence length="188" mass="20419">MLLREIKDQTKQVVQEVLELSDLQKGQIFVLGLSSSEVIGGHIGKNSSLEVGEVVVETILEILDQKGIYLAVQGCEHLNRALVVERELAIQKDLEIVNVLPTLHAGGSGQLAAFKYMKDPVEVEFITAQAGVDIGDTAIGMHIKHVQVPIRPSLREIGQAHVTALASRPKLIGGVRAAYQEDEIRKGS</sequence>
<reference key="1">
    <citation type="journal article" date="2007" name="PLoS ONE">
        <title>A glimpse of streptococcal toxic shock syndrome from comparative genomics of S. suis 2 Chinese isolates.</title>
        <authorList>
            <person name="Chen C."/>
            <person name="Tang J."/>
            <person name="Dong W."/>
            <person name="Wang C."/>
            <person name="Feng Y."/>
            <person name="Wang J."/>
            <person name="Zheng F."/>
            <person name="Pan X."/>
            <person name="Liu D."/>
            <person name="Li M."/>
            <person name="Song Y."/>
            <person name="Zhu X."/>
            <person name="Sun H."/>
            <person name="Feng T."/>
            <person name="Guo Z."/>
            <person name="Ju A."/>
            <person name="Ge J."/>
            <person name="Dong Y."/>
            <person name="Sun W."/>
            <person name="Jiang Y."/>
            <person name="Wang J."/>
            <person name="Yan J."/>
            <person name="Yang H."/>
            <person name="Wang X."/>
            <person name="Gao G.F."/>
            <person name="Yang R."/>
            <person name="Wang J."/>
            <person name="Yu J."/>
        </authorList>
    </citation>
    <scope>NUCLEOTIDE SEQUENCE [LARGE SCALE GENOMIC DNA]</scope>
    <source>
        <strain>98HAH33</strain>
    </source>
</reference>
<organism>
    <name type="scientific">Streptococcus suis (strain 98HAH33)</name>
    <dbReference type="NCBI Taxonomy" id="391296"/>
    <lineage>
        <taxon>Bacteria</taxon>
        <taxon>Bacillati</taxon>
        <taxon>Bacillota</taxon>
        <taxon>Bacilli</taxon>
        <taxon>Lactobacillales</taxon>
        <taxon>Streptococcaceae</taxon>
        <taxon>Streptococcus</taxon>
    </lineage>
</organism>
<gene>
    <name type="ordered locus">SSU98_0310</name>
</gene>
<dbReference type="EMBL" id="CP000408">
    <property type="protein sequence ID" value="ABP91468.1"/>
    <property type="molecule type" value="Genomic_DNA"/>
</dbReference>
<dbReference type="SMR" id="A4VZC9"/>
<dbReference type="KEGG" id="ssv:SSU98_0310"/>
<dbReference type="HOGENOM" id="CLU_106658_0_0_9"/>
<dbReference type="BioCyc" id="SSUI391296:GI2E-342-MONOMER"/>
<dbReference type="Gene3D" id="3.40.50.10360">
    <property type="entry name" value="Hypothetical protein TT1679"/>
    <property type="match status" value="1"/>
</dbReference>
<dbReference type="HAMAP" id="MF_00800">
    <property type="entry name" value="UPF0340"/>
    <property type="match status" value="1"/>
</dbReference>
<dbReference type="InterPro" id="IPR028345">
    <property type="entry name" value="Antibiotic_NAT-like"/>
</dbReference>
<dbReference type="InterPro" id="IPR006340">
    <property type="entry name" value="DUF436"/>
</dbReference>
<dbReference type="NCBIfam" id="TIGR01440">
    <property type="entry name" value="TIGR01440 family protein"/>
    <property type="match status" value="1"/>
</dbReference>
<dbReference type="Pfam" id="PF04260">
    <property type="entry name" value="DUF436"/>
    <property type="match status" value="1"/>
</dbReference>
<dbReference type="PIRSF" id="PIRSF007510">
    <property type="entry name" value="UCP007510"/>
    <property type="match status" value="1"/>
</dbReference>
<dbReference type="SUPFAM" id="SSF110710">
    <property type="entry name" value="TTHA0583/YokD-like"/>
    <property type="match status" value="1"/>
</dbReference>
<protein>
    <recommendedName>
        <fullName evidence="1">UPF0340 protein SSU98_0310</fullName>
    </recommendedName>
</protein>
<accession>A4VZC9</accession>
<proteinExistence type="inferred from homology"/>
<name>Y310_STRS2</name>
<feature type="chain" id="PRO_1000046987" description="UPF0340 protein SSU98_0310">
    <location>
        <begin position="1"/>
        <end position="188"/>
    </location>
</feature>
<evidence type="ECO:0000255" key="1">
    <source>
        <dbReference type="HAMAP-Rule" id="MF_00800"/>
    </source>
</evidence>
<comment type="similarity">
    <text evidence="1">Belongs to the UPF0340 family.</text>
</comment>